<sequence>MAAKATSEKGFKTITDNRRARHEYHVIETYEAGIALSGTEVKSLRAGKANLQDAFARVENGEMMLYNLHISPYEQGNRFNHEPKRTRRLLMHKQEILRLYGKVREKGLALIPLKVYFNPRGKVKVQLALAQGKKSYDKRHDIAARDAKRDMDRAMRERQKM</sequence>
<protein>
    <recommendedName>
        <fullName evidence="1">SsrA-binding protein</fullName>
    </recommendedName>
    <alternativeName>
        <fullName evidence="1">Small protein B</fullName>
    </alternativeName>
</protein>
<organism>
    <name type="scientific">Desulforamulus reducens (strain ATCC BAA-1160 / DSM 100696 / MI-1)</name>
    <name type="common">Desulfotomaculum reducens</name>
    <dbReference type="NCBI Taxonomy" id="349161"/>
    <lineage>
        <taxon>Bacteria</taxon>
        <taxon>Bacillati</taxon>
        <taxon>Bacillota</taxon>
        <taxon>Clostridia</taxon>
        <taxon>Eubacteriales</taxon>
        <taxon>Peptococcaceae</taxon>
        <taxon>Desulforamulus</taxon>
    </lineage>
</organism>
<evidence type="ECO:0000255" key="1">
    <source>
        <dbReference type="HAMAP-Rule" id="MF_00023"/>
    </source>
</evidence>
<reference key="1">
    <citation type="submission" date="2007-03" db="EMBL/GenBank/DDBJ databases">
        <title>Complete sequence of Desulfotomaculum reducens MI-1.</title>
        <authorList>
            <consortium name="US DOE Joint Genome Institute"/>
            <person name="Copeland A."/>
            <person name="Lucas S."/>
            <person name="Lapidus A."/>
            <person name="Barry K."/>
            <person name="Detter J.C."/>
            <person name="Glavina del Rio T."/>
            <person name="Hammon N."/>
            <person name="Israni S."/>
            <person name="Dalin E."/>
            <person name="Tice H."/>
            <person name="Pitluck S."/>
            <person name="Sims D."/>
            <person name="Brettin T."/>
            <person name="Bruce D."/>
            <person name="Han C."/>
            <person name="Tapia R."/>
            <person name="Schmutz J."/>
            <person name="Larimer F."/>
            <person name="Land M."/>
            <person name="Hauser L."/>
            <person name="Kyrpides N."/>
            <person name="Kim E."/>
            <person name="Tebo B.M."/>
            <person name="Richardson P."/>
        </authorList>
    </citation>
    <scope>NUCLEOTIDE SEQUENCE [LARGE SCALE GENOMIC DNA]</scope>
    <source>
        <strain>ATCC BAA-1160 / DSM 100696 / MI-1</strain>
    </source>
</reference>
<feature type="chain" id="PRO_0000331042" description="SsrA-binding protein">
    <location>
        <begin position="1"/>
        <end position="161"/>
    </location>
</feature>
<dbReference type="EMBL" id="CP000612">
    <property type="protein sequence ID" value="ABO51487.1"/>
    <property type="molecule type" value="Genomic_DNA"/>
</dbReference>
<dbReference type="RefSeq" id="WP_011879278.1">
    <property type="nucleotide sequence ID" value="NC_009253.1"/>
</dbReference>
<dbReference type="SMR" id="A4J8T4"/>
<dbReference type="STRING" id="349161.Dred_2984"/>
<dbReference type="KEGG" id="drm:Dred_2984"/>
<dbReference type="eggNOG" id="COG0691">
    <property type="taxonomic scope" value="Bacteria"/>
</dbReference>
<dbReference type="HOGENOM" id="CLU_108953_0_0_9"/>
<dbReference type="OrthoDB" id="9805462at2"/>
<dbReference type="Proteomes" id="UP000001556">
    <property type="component" value="Chromosome"/>
</dbReference>
<dbReference type="GO" id="GO:0005829">
    <property type="term" value="C:cytosol"/>
    <property type="evidence" value="ECO:0007669"/>
    <property type="project" value="TreeGrafter"/>
</dbReference>
<dbReference type="GO" id="GO:0003723">
    <property type="term" value="F:RNA binding"/>
    <property type="evidence" value="ECO:0007669"/>
    <property type="project" value="UniProtKB-UniRule"/>
</dbReference>
<dbReference type="GO" id="GO:0070929">
    <property type="term" value="P:trans-translation"/>
    <property type="evidence" value="ECO:0007669"/>
    <property type="project" value="UniProtKB-UniRule"/>
</dbReference>
<dbReference type="CDD" id="cd09294">
    <property type="entry name" value="SmpB"/>
    <property type="match status" value="1"/>
</dbReference>
<dbReference type="Gene3D" id="2.40.280.10">
    <property type="match status" value="1"/>
</dbReference>
<dbReference type="HAMAP" id="MF_00023">
    <property type="entry name" value="SmpB"/>
    <property type="match status" value="1"/>
</dbReference>
<dbReference type="InterPro" id="IPR023620">
    <property type="entry name" value="SmpB"/>
</dbReference>
<dbReference type="InterPro" id="IPR000037">
    <property type="entry name" value="SsrA-bd_prot"/>
</dbReference>
<dbReference type="InterPro" id="IPR020081">
    <property type="entry name" value="SsrA-bd_prot_CS"/>
</dbReference>
<dbReference type="NCBIfam" id="NF003843">
    <property type="entry name" value="PRK05422.1"/>
    <property type="match status" value="1"/>
</dbReference>
<dbReference type="NCBIfam" id="TIGR00086">
    <property type="entry name" value="smpB"/>
    <property type="match status" value="1"/>
</dbReference>
<dbReference type="PANTHER" id="PTHR30308:SF2">
    <property type="entry name" value="SSRA-BINDING PROTEIN"/>
    <property type="match status" value="1"/>
</dbReference>
<dbReference type="PANTHER" id="PTHR30308">
    <property type="entry name" value="TMRNA-BINDING COMPONENT OF TRANS-TRANSLATION TAGGING COMPLEX"/>
    <property type="match status" value="1"/>
</dbReference>
<dbReference type="Pfam" id="PF01668">
    <property type="entry name" value="SmpB"/>
    <property type="match status" value="1"/>
</dbReference>
<dbReference type="SUPFAM" id="SSF74982">
    <property type="entry name" value="Small protein B (SmpB)"/>
    <property type="match status" value="1"/>
</dbReference>
<dbReference type="PROSITE" id="PS01317">
    <property type="entry name" value="SSRP"/>
    <property type="match status" value="1"/>
</dbReference>
<name>SSRP_DESRM</name>
<keyword id="KW-0963">Cytoplasm</keyword>
<keyword id="KW-1185">Reference proteome</keyword>
<keyword id="KW-0694">RNA-binding</keyword>
<proteinExistence type="inferred from homology"/>
<gene>
    <name evidence="1" type="primary">smpB</name>
    <name type="ordered locus">Dred_2984</name>
</gene>
<accession>A4J8T4</accession>
<comment type="function">
    <text evidence="1">Required for rescue of stalled ribosomes mediated by trans-translation. Binds to transfer-messenger RNA (tmRNA), required for stable association of tmRNA with ribosomes. tmRNA and SmpB together mimic tRNA shape, replacing the anticodon stem-loop with SmpB. tmRNA is encoded by the ssrA gene; the 2 termini fold to resemble tRNA(Ala) and it encodes a 'tag peptide', a short internal open reading frame. During trans-translation Ala-aminoacylated tmRNA acts like a tRNA, entering the A-site of stalled ribosomes, displacing the stalled mRNA. The ribosome then switches to translate the ORF on the tmRNA; the nascent peptide is terminated with the 'tag peptide' encoded by the tmRNA and targeted for degradation. The ribosome is freed to recommence translation, which seems to be the essential function of trans-translation.</text>
</comment>
<comment type="subcellular location">
    <subcellularLocation>
        <location evidence="1">Cytoplasm</location>
    </subcellularLocation>
    <text evidence="1">The tmRNA-SmpB complex associates with stalled 70S ribosomes.</text>
</comment>
<comment type="similarity">
    <text evidence="1">Belongs to the SmpB family.</text>
</comment>